<protein>
    <recommendedName>
        <fullName evidence="1">Tryptophan synthase alpha chain</fullName>
        <ecNumber evidence="1">4.2.1.20</ecNumber>
    </recommendedName>
</protein>
<proteinExistence type="inferred from homology"/>
<sequence>MNKIKRLFINKKKNILNIYFTAGYPSIDSMPLILKRLQNLNIDIVEIGIPYSDPLADGNIIQKSNTKSLKNGMNISVLFYKLKKVKKYINIPIILMGYYNQFIKYGEIKFLEDCIESGVSGLILPDLPPRIYLNKYKKIFKKSKLAFIVLITPQTSLKRLKRLSSITDYFLYIVSSNSTTGTKNNINLSFLERIKEINVPKLIGFGICDKKSLNIAFKYAEGAIIGSAFIKAIKKSYLEKSIEKFIKYIIK</sequence>
<dbReference type="EC" id="4.2.1.20" evidence="1"/>
<dbReference type="EMBL" id="CP000770">
    <property type="protein sequence ID" value="ABS30533.1"/>
    <property type="molecule type" value="Genomic_DNA"/>
</dbReference>
<dbReference type="SMR" id="A8Z5Y2"/>
<dbReference type="STRING" id="444179.SMGWSS_121"/>
<dbReference type="KEGG" id="smg:SMGWSS_121"/>
<dbReference type="HOGENOM" id="CLU_016734_0_0_10"/>
<dbReference type="UniPathway" id="UPA00035">
    <property type="reaction ID" value="UER00044"/>
</dbReference>
<dbReference type="Proteomes" id="UP000000781">
    <property type="component" value="Chromosome"/>
</dbReference>
<dbReference type="GO" id="GO:0005829">
    <property type="term" value="C:cytosol"/>
    <property type="evidence" value="ECO:0007669"/>
    <property type="project" value="TreeGrafter"/>
</dbReference>
<dbReference type="GO" id="GO:0004834">
    <property type="term" value="F:tryptophan synthase activity"/>
    <property type="evidence" value="ECO:0007669"/>
    <property type="project" value="UniProtKB-UniRule"/>
</dbReference>
<dbReference type="CDD" id="cd04724">
    <property type="entry name" value="Tryptophan_synthase_alpha"/>
    <property type="match status" value="1"/>
</dbReference>
<dbReference type="Gene3D" id="3.20.20.70">
    <property type="entry name" value="Aldolase class I"/>
    <property type="match status" value="1"/>
</dbReference>
<dbReference type="HAMAP" id="MF_00131">
    <property type="entry name" value="Trp_synth_alpha"/>
    <property type="match status" value="1"/>
</dbReference>
<dbReference type="InterPro" id="IPR013785">
    <property type="entry name" value="Aldolase_TIM"/>
</dbReference>
<dbReference type="InterPro" id="IPR011060">
    <property type="entry name" value="RibuloseP-bd_barrel"/>
</dbReference>
<dbReference type="InterPro" id="IPR018204">
    <property type="entry name" value="Trp_synthase_alpha_AS"/>
</dbReference>
<dbReference type="InterPro" id="IPR002028">
    <property type="entry name" value="Trp_synthase_suA"/>
</dbReference>
<dbReference type="NCBIfam" id="TIGR00262">
    <property type="entry name" value="trpA"/>
    <property type="match status" value="1"/>
</dbReference>
<dbReference type="PANTHER" id="PTHR43406:SF1">
    <property type="entry name" value="TRYPTOPHAN SYNTHASE ALPHA CHAIN, CHLOROPLASTIC"/>
    <property type="match status" value="1"/>
</dbReference>
<dbReference type="PANTHER" id="PTHR43406">
    <property type="entry name" value="TRYPTOPHAN SYNTHASE, ALPHA CHAIN"/>
    <property type="match status" value="1"/>
</dbReference>
<dbReference type="Pfam" id="PF00290">
    <property type="entry name" value="Trp_syntA"/>
    <property type="match status" value="1"/>
</dbReference>
<dbReference type="SUPFAM" id="SSF51366">
    <property type="entry name" value="Ribulose-phoshate binding barrel"/>
    <property type="match status" value="1"/>
</dbReference>
<dbReference type="PROSITE" id="PS00167">
    <property type="entry name" value="TRP_SYNTHASE_ALPHA"/>
    <property type="match status" value="1"/>
</dbReference>
<comment type="function">
    <text evidence="1">The alpha subunit is responsible for the aldol cleavage of indoleglycerol phosphate to indole and glyceraldehyde 3-phosphate.</text>
</comment>
<comment type="catalytic activity">
    <reaction evidence="1">
        <text>(1S,2R)-1-C-(indol-3-yl)glycerol 3-phosphate + L-serine = D-glyceraldehyde 3-phosphate + L-tryptophan + H2O</text>
        <dbReference type="Rhea" id="RHEA:10532"/>
        <dbReference type="ChEBI" id="CHEBI:15377"/>
        <dbReference type="ChEBI" id="CHEBI:33384"/>
        <dbReference type="ChEBI" id="CHEBI:57912"/>
        <dbReference type="ChEBI" id="CHEBI:58866"/>
        <dbReference type="ChEBI" id="CHEBI:59776"/>
        <dbReference type="EC" id="4.2.1.20"/>
    </reaction>
</comment>
<comment type="pathway">
    <text evidence="1">Amino-acid biosynthesis; L-tryptophan biosynthesis; L-tryptophan from chorismate: step 5/5.</text>
</comment>
<comment type="subunit">
    <text evidence="1">Tetramer of two alpha and two beta chains.</text>
</comment>
<comment type="similarity">
    <text evidence="1">Belongs to the TrpA family.</text>
</comment>
<name>TRPA_KARMG</name>
<accession>A8Z5Y2</accession>
<keyword id="KW-0028">Amino-acid biosynthesis</keyword>
<keyword id="KW-0057">Aromatic amino acid biosynthesis</keyword>
<keyword id="KW-0456">Lyase</keyword>
<keyword id="KW-0822">Tryptophan biosynthesis</keyword>
<gene>
    <name evidence="1" type="primary">trpA</name>
    <name type="ordered locus">SMGWSS_121</name>
</gene>
<reference key="1">
    <citation type="journal article" date="2007" name="Proc. Natl. Acad. Sci. U.S.A.">
        <title>Parallel genomic evolution and metabolic interdependence in an ancient symbiosis.</title>
        <authorList>
            <person name="McCutcheon J.P."/>
            <person name="Moran N.A."/>
        </authorList>
    </citation>
    <scope>NUCLEOTIDE SEQUENCE [LARGE SCALE GENOMIC DNA]</scope>
    <source>
        <strain>GWSS</strain>
    </source>
</reference>
<organism>
    <name type="scientific">Karelsulcia muelleri (strain GWSS)</name>
    <name type="common">Sulcia muelleri</name>
    <dbReference type="NCBI Taxonomy" id="444179"/>
    <lineage>
        <taxon>Bacteria</taxon>
        <taxon>Pseudomonadati</taxon>
        <taxon>Bacteroidota</taxon>
        <taxon>Flavobacteriia</taxon>
        <taxon>Flavobacteriales</taxon>
        <taxon>Candidatus Karelsulcia</taxon>
    </lineage>
</organism>
<evidence type="ECO:0000255" key="1">
    <source>
        <dbReference type="HAMAP-Rule" id="MF_00131"/>
    </source>
</evidence>
<feature type="chain" id="PRO_1000076374" description="Tryptophan synthase alpha chain">
    <location>
        <begin position="1"/>
        <end position="251"/>
    </location>
</feature>
<feature type="active site" description="Proton acceptor" evidence="1">
    <location>
        <position position="46"/>
    </location>
</feature>
<feature type="active site" description="Proton acceptor" evidence="1">
    <location>
        <position position="57"/>
    </location>
</feature>